<reference key="1">
    <citation type="journal article" date="2004" name="Nature">
        <title>Genome evolution in yeasts.</title>
        <authorList>
            <person name="Dujon B."/>
            <person name="Sherman D."/>
            <person name="Fischer G."/>
            <person name="Durrens P."/>
            <person name="Casaregola S."/>
            <person name="Lafontaine I."/>
            <person name="de Montigny J."/>
            <person name="Marck C."/>
            <person name="Neuveglise C."/>
            <person name="Talla E."/>
            <person name="Goffard N."/>
            <person name="Frangeul L."/>
            <person name="Aigle M."/>
            <person name="Anthouard V."/>
            <person name="Babour A."/>
            <person name="Barbe V."/>
            <person name="Barnay S."/>
            <person name="Blanchin S."/>
            <person name="Beckerich J.-M."/>
            <person name="Beyne E."/>
            <person name="Bleykasten C."/>
            <person name="Boisrame A."/>
            <person name="Boyer J."/>
            <person name="Cattolico L."/>
            <person name="Confanioleri F."/>
            <person name="de Daruvar A."/>
            <person name="Despons L."/>
            <person name="Fabre E."/>
            <person name="Fairhead C."/>
            <person name="Ferry-Dumazet H."/>
            <person name="Groppi A."/>
            <person name="Hantraye F."/>
            <person name="Hennequin C."/>
            <person name="Jauniaux N."/>
            <person name="Joyet P."/>
            <person name="Kachouri R."/>
            <person name="Kerrest A."/>
            <person name="Koszul R."/>
            <person name="Lemaire M."/>
            <person name="Lesur I."/>
            <person name="Ma L."/>
            <person name="Muller H."/>
            <person name="Nicaud J.-M."/>
            <person name="Nikolski M."/>
            <person name="Oztas S."/>
            <person name="Ozier-Kalogeropoulos O."/>
            <person name="Pellenz S."/>
            <person name="Potier S."/>
            <person name="Richard G.-F."/>
            <person name="Straub M.-L."/>
            <person name="Suleau A."/>
            <person name="Swennen D."/>
            <person name="Tekaia F."/>
            <person name="Wesolowski-Louvel M."/>
            <person name="Westhof E."/>
            <person name="Wirth B."/>
            <person name="Zeniou-Meyer M."/>
            <person name="Zivanovic Y."/>
            <person name="Bolotin-Fukuhara M."/>
            <person name="Thierry A."/>
            <person name="Bouchier C."/>
            <person name="Caudron B."/>
            <person name="Scarpelli C."/>
            <person name="Gaillardin C."/>
            <person name="Weissenbach J."/>
            <person name="Wincker P."/>
            <person name="Souciet J.-L."/>
        </authorList>
    </citation>
    <scope>NUCLEOTIDE SEQUENCE [LARGE SCALE GENOMIC DNA]</scope>
    <source>
        <strain>CLIB 122 / E 150</strain>
    </source>
</reference>
<sequence>MISLNKKLVLLVGVIFHVAFMWSIFDIYFVSPLIHGMKHHQSTATPPAKRLFLIVGDGLRADKAFEKVRHPTTGESEYLAPFLRSKVMSDATFGISHTRMPTESRPGHVALIAGFYEDVSAVTKGWKENPVDFDSVFNQSRHTYSLGSPDILPMFKHGAEDQSRIDAIMYGHDFEDFTKGSIELDAFVFDHLDEIFDKSKTNKTLDDQLRSDKTVFFLHLLGIDTAGHSYRPYSAEYYDNIKYIDENIEKLVDKVNKFYNDDEQTAWVFTADHGMSDWGSHGDGHPDNTRTPLIAWGAGVNKPIPAFEDKGNHDDYSEVWDLPVKRNDVNQADIASLMSYLVGLNYPSNSVGELPLAFVNATSETKALAIRNNALALVEQYLVKEEQQKGSQIIFKPYPPLSDAGKTIDERLAHIDELIAQGLDQESIVASEELMTYAITGLKYLQTYNWLFLRTLVTIGFFGWIAVAFCSYLLAFVVQSDKPFTTSLPLKGVAYVALAILSGFFVFQKSPLHYHLYAVFPVVFWEAVLQRRTAVAEGISILARRSTSKAPALAAILDIGLSLVLLEAIVYGYFHREIFSVCFGLATLWPFVHNFTVAKREWPTTLAWVVMCAIMSSFTLLEVVKVESIEQILLSGALMLVIGLVFTIHLQRKLALAASTVCVLFAQILLVVATMYFTRESVESLTARNGLPLFSQVGGWISLLLSLAVPFLHFLGSDAKDYRLRLLIIFLAFGPTFVILTISWEGFFYVCFFAILVIWIELETQMRDARVTPQTRADLTPGDFRMALFTFFMSQIGFFGIGNIASISSFSLDSVYRLIPVFDPFSMGALLMFKILVPFAVLSACLGILNLKLGVPPSALFSMVLCVSDILTLNFFYLVVDEGSWLDIGTGISHYCIASGLSLFMMVLEYLSGVLVAGVTIAPHVSKIKKDM</sequence>
<comment type="function">
    <text evidence="1">Ethanolamine phosphate transferase involved in glycosylphosphatidylinositol-anchor biosynthesis. Transfers ethanolamine phosphate to the first alpha-1,4-linked mannose of the glycosylphosphatidylinositol precursor of GPI-anchor (By similarity).</text>
</comment>
<comment type="pathway">
    <text>Glycolipid biosynthesis; glycosylphosphatidylinositol-anchor biosynthesis.</text>
</comment>
<comment type="subcellular location">
    <subcellularLocation>
        <location evidence="1">Endoplasmic reticulum membrane</location>
        <topology evidence="1">Multi-pass membrane protein</topology>
    </subcellularLocation>
</comment>
<comment type="similarity">
    <text evidence="3">Belongs to the PIGG/PIGN/PIGO family. PIGN subfamily.</text>
</comment>
<feature type="chain" id="PRO_0000246211" description="GPI ethanolamine phosphate transferase 1">
    <location>
        <begin position="1"/>
        <end position="932"/>
    </location>
</feature>
<feature type="topological domain" description="Cytoplasmic" evidence="2">
    <location>
        <begin position="1"/>
        <end position="8"/>
    </location>
</feature>
<feature type="transmembrane region" description="Helical" evidence="2">
    <location>
        <begin position="9"/>
        <end position="29"/>
    </location>
</feature>
<feature type="topological domain" description="Lumenal" evidence="2">
    <location>
        <begin position="30"/>
        <end position="456"/>
    </location>
</feature>
<feature type="transmembrane region" description="Helical" evidence="2">
    <location>
        <begin position="457"/>
        <end position="477"/>
    </location>
</feature>
<feature type="topological domain" description="Cytoplasmic" evidence="2">
    <location>
        <begin position="478"/>
        <end position="486"/>
    </location>
</feature>
<feature type="transmembrane region" description="Helical" evidence="2">
    <location>
        <begin position="487"/>
        <end position="507"/>
    </location>
</feature>
<feature type="topological domain" description="Lumenal" evidence="2">
    <location>
        <begin position="508"/>
        <end position="509"/>
    </location>
</feature>
<feature type="transmembrane region" description="Helical" evidence="2">
    <location>
        <begin position="510"/>
        <end position="530"/>
    </location>
</feature>
<feature type="topological domain" description="Cytoplasmic" evidence="2">
    <location>
        <begin position="531"/>
        <end position="551"/>
    </location>
</feature>
<feature type="transmembrane region" description="Helical" evidence="2">
    <location>
        <begin position="552"/>
        <end position="572"/>
    </location>
</feature>
<feature type="topological domain" description="Lumenal" evidence="2">
    <location>
        <begin position="573"/>
        <end position="577"/>
    </location>
</feature>
<feature type="transmembrane region" description="Helical" evidence="2">
    <location>
        <begin position="578"/>
        <end position="598"/>
    </location>
</feature>
<feature type="topological domain" description="Cytoplasmic" evidence="2">
    <location>
        <begin position="599"/>
        <end position="603"/>
    </location>
</feature>
<feature type="transmembrane region" description="Helical" evidence="2">
    <location>
        <begin position="604"/>
        <end position="624"/>
    </location>
</feature>
<feature type="topological domain" description="Lumenal" evidence="2">
    <location>
        <begin position="625"/>
        <end position="627"/>
    </location>
</feature>
<feature type="transmembrane region" description="Helical" evidence="2">
    <location>
        <begin position="628"/>
        <end position="648"/>
    </location>
</feature>
<feature type="topological domain" description="Cytoplasmic" evidence="2">
    <location>
        <begin position="649"/>
        <end position="653"/>
    </location>
</feature>
<feature type="transmembrane region" description="Helical" evidence="2">
    <location>
        <begin position="654"/>
        <end position="674"/>
    </location>
</feature>
<feature type="topological domain" description="Lumenal" evidence="2">
    <location>
        <begin position="675"/>
        <end position="696"/>
    </location>
</feature>
<feature type="transmembrane region" description="Helical" evidence="2">
    <location>
        <begin position="697"/>
        <end position="717"/>
    </location>
</feature>
<feature type="topological domain" description="Cytoplasmic" evidence="2">
    <location>
        <begin position="718"/>
        <end position="737"/>
    </location>
</feature>
<feature type="transmembrane region" description="Helical" evidence="2">
    <location>
        <begin position="738"/>
        <end position="758"/>
    </location>
</feature>
<feature type="topological domain" description="Lumenal" evidence="2">
    <location>
        <begin position="759"/>
        <end position="786"/>
    </location>
</feature>
<feature type="transmembrane region" description="Helical" evidence="2">
    <location>
        <begin position="787"/>
        <end position="807"/>
    </location>
</feature>
<feature type="topological domain" description="Cytoplasmic" evidence="2">
    <location>
        <begin position="808"/>
        <end position="828"/>
    </location>
</feature>
<feature type="transmembrane region" description="Helical" evidence="2">
    <location>
        <begin position="829"/>
        <end position="849"/>
    </location>
</feature>
<feature type="topological domain" description="Lumenal" evidence="2">
    <location>
        <begin position="850"/>
        <end position="859"/>
    </location>
</feature>
<feature type="transmembrane region" description="Helical" evidence="2">
    <location>
        <begin position="860"/>
        <end position="880"/>
    </location>
</feature>
<feature type="topological domain" description="Cytoplasmic" evidence="2">
    <location>
        <begin position="881"/>
        <end position="900"/>
    </location>
</feature>
<feature type="transmembrane region" description="Helical" evidence="2">
    <location>
        <begin position="901"/>
        <end position="921"/>
    </location>
</feature>
<feature type="topological domain" description="Lumenal" evidence="2">
    <location>
        <begin position="922"/>
        <end position="932"/>
    </location>
</feature>
<feature type="glycosylation site" description="N-linked (GlcNAc...) asparagine" evidence="2">
    <location>
        <position position="138"/>
    </location>
</feature>
<feature type="glycosylation site" description="N-linked (GlcNAc...) asparagine" evidence="2">
    <location>
        <position position="202"/>
    </location>
</feature>
<feature type="glycosylation site" description="N-linked (GlcNAc...) asparagine" evidence="2">
    <location>
        <position position="360"/>
    </location>
</feature>
<organism>
    <name type="scientific">Yarrowia lipolytica (strain CLIB 122 / E 150)</name>
    <name type="common">Yeast</name>
    <name type="synonym">Candida lipolytica</name>
    <dbReference type="NCBI Taxonomy" id="284591"/>
    <lineage>
        <taxon>Eukaryota</taxon>
        <taxon>Fungi</taxon>
        <taxon>Dikarya</taxon>
        <taxon>Ascomycota</taxon>
        <taxon>Saccharomycotina</taxon>
        <taxon>Dipodascomycetes</taxon>
        <taxon>Dipodascales</taxon>
        <taxon>Dipodascales incertae sedis</taxon>
        <taxon>Yarrowia</taxon>
    </lineage>
</organism>
<dbReference type="EC" id="2.-.-.-"/>
<dbReference type="EMBL" id="CR382132">
    <property type="protein sequence ID" value="CAG78478.1"/>
    <property type="molecule type" value="Genomic_DNA"/>
</dbReference>
<dbReference type="RefSeq" id="XP_505669.1">
    <property type="nucleotide sequence ID" value="XM_505669.1"/>
</dbReference>
<dbReference type="SMR" id="Q6C0Z3"/>
<dbReference type="FunCoup" id="Q6C0Z3">
    <property type="interactions" value="527"/>
</dbReference>
<dbReference type="STRING" id="284591.Q6C0Z3"/>
<dbReference type="GlyCosmos" id="Q6C0Z3">
    <property type="glycosylation" value="3 sites, No reported glycans"/>
</dbReference>
<dbReference type="EnsemblFungi" id="CAG78478">
    <property type="protein sequence ID" value="CAG78478"/>
    <property type="gene ID" value="YALI0_F20570g"/>
</dbReference>
<dbReference type="KEGG" id="yli:2908691"/>
<dbReference type="VEuPathDB" id="FungiDB:YALI0_F20570g"/>
<dbReference type="HOGENOM" id="CLU_007676_0_0_1"/>
<dbReference type="InParanoid" id="Q6C0Z3"/>
<dbReference type="OMA" id="QSYFHRE"/>
<dbReference type="OrthoDB" id="105088at4891"/>
<dbReference type="UniPathway" id="UPA00196"/>
<dbReference type="Proteomes" id="UP000001300">
    <property type="component" value="Chromosome F"/>
</dbReference>
<dbReference type="GO" id="GO:0005789">
    <property type="term" value="C:endoplasmic reticulum membrane"/>
    <property type="evidence" value="ECO:0000318"/>
    <property type="project" value="GO_Central"/>
</dbReference>
<dbReference type="GO" id="GO:0051377">
    <property type="term" value="F:mannose-ethanolamine phosphotransferase activity"/>
    <property type="evidence" value="ECO:0000318"/>
    <property type="project" value="GO_Central"/>
</dbReference>
<dbReference type="GO" id="GO:0071555">
    <property type="term" value="P:cell wall organization"/>
    <property type="evidence" value="ECO:0007669"/>
    <property type="project" value="UniProtKB-KW"/>
</dbReference>
<dbReference type="GO" id="GO:0006506">
    <property type="term" value="P:GPI anchor biosynthetic process"/>
    <property type="evidence" value="ECO:0000318"/>
    <property type="project" value="GO_Central"/>
</dbReference>
<dbReference type="CDD" id="cd16020">
    <property type="entry name" value="GPI_EPT_1"/>
    <property type="match status" value="1"/>
</dbReference>
<dbReference type="FunFam" id="3.40.720.10:FF:000015">
    <property type="entry name" value="GPI ethanolamine phosphate transferase 1"/>
    <property type="match status" value="1"/>
</dbReference>
<dbReference type="Gene3D" id="3.40.720.10">
    <property type="entry name" value="Alkaline Phosphatase, subunit A"/>
    <property type="match status" value="1"/>
</dbReference>
<dbReference type="InterPro" id="IPR017850">
    <property type="entry name" value="Alkaline_phosphatase_core_sf"/>
</dbReference>
<dbReference type="InterPro" id="IPR007070">
    <property type="entry name" value="GPI_EtnP_transferase_1"/>
</dbReference>
<dbReference type="InterPro" id="IPR017852">
    <property type="entry name" value="GPI_EtnP_transferase_1_C"/>
</dbReference>
<dbReference type="InterPro" id="IPR002591">
    <property type="entry name" value="Phosphodiest/P_Trfase"/>
</dbReference>
<dbReference type="InterPro" id="IPR037671">
    <property type="entry name" value="PIGN_N"/>
</dbReference>
<dbReference type="PANTHER" id="PTHR12250:SF0">
    <property type="entry name" value="GPI ETHANOLAMINE PHOSPHATE TRANSFERASE 1"/>
    <property type="match status" value="1"/>
</dbReference>
<dbReference type="PANTHER" id="PTHR12250">
    <property type="entry name" value="PHOSPHATIDYLINOSITOL GLYCAN, CLASS N"/>
    <property type="match status" value="1"/>
</dbReference>
<dbReference type="Pfam" id="PF01663">
    <property type="entry name" value="Phosphodiest"/>
    <property type="match status" value="1"/>
</dbReference>
<dbReference type="Pfam" id="PF04987">
    <property type="entry name" value="PigN"/>
    <property type="match status" value="1"/>
</dbReference>
<dbReference type="SUPFAM" id="SSF53649">
    <property type="entry name" value="Alkaline phosphatase-like"/>
    <property type="match status" value="1"/>
</dbReference>
<gene>
    <name type="primary">MCD4</name>
    <name type="ordered locus">YALI0F20570g</name>
</gene>
<evidence type="ECO:0000250" key="1"/>
<evidence type="ECO:0000255" key="2"/>
<evidence type="ECO:0000305" key="3"/>
<accession>Q6C0Z3</accession>
<keyword id="KW-0961">Cell wall biogenesis/degradation</keyword>
<keyword id="KW-0256">Endoplasmic reticulum</keyword>
<keyword id="KW-0325">Glycoprotein</keyword>
<keyword id="KW-0337">GPI-anchor biosynthesis</keyword>
<keyword id="KW-0472">Membrane</keyword>
<keyword id="KW-1185">Reference proteome</keyword>
<keyword id="KW-0808">Transferase</keyword>
<keyword id="KW-0812">Transmembrane</keyword>
<keyword id="KW-1133">Transmembrane helix</keyword>
<name>MCD4_YARLI</name>
<protein>
    <recommendedName>
        <fullName>GPI ethanolamine phosphate transferase 1</fullName>
        <ecNumber>2.-.-.-</ecNumber>
    </recommendedName>
</protein>
<proteinExistence type="inferred from homology"/>